<keyword id="KW-0010">Activator</keyword>
<keyword id="KW-0244">Early protein</keyword>
<keyword id="KW-1078">G1/S host cell cycle checkpoint dysregulation by virus</keyword>
<keyword id="KW-0945">Host-virus interaction</keyword>
<keyword id="KW-1090">Inhibition of host innate immune response by virus</keyword>
<keyword id="KW-1114">Inhibition of host interferon signaling pathway by virus</keyword>
<keyword id="KW-1105">Inhibition of host STAT1 by virus</keyword>
<keyword id="KW-0922">Interferon antiviral system evasion</keyword>
<keyword id="KW-0479">Metal-binding</keyword>
<keyword id="KW-1121">Modulation of host cell cycle by virus</keyword>
<keyword id="KW-0804">Transcription</keyword>
<keyword id="KW-0805">Transcription regulation</keyword>
<keyword id="KW-0899">Viral immunoevasion</keyword>
<keyword id="KW-0862">Zinc</keyword>
<keyword id="KW-0863">Zinc-finger</keyword>
<accession>P12534</accession>
<comment type="function">
    <text evidence="1">E1A protein has both transforming and trans-activating activities. Plays a role in viral genome replication by driving entry of quiescent cells into the cell cycle. Disrupts the function of host retinoblastoma protein RB1/pRb and isoform early E1A 26 kDa protein stabilizes TP53, which are key regulators of the cell cycle. Induces the disassembly of the E2F1 transcription factors from RB1 by direct competition for the same binding site on RB1, with subsequent transcriptional activation of E2F1-regulated S-phase genes. Inactivation of the ability of RB1 to arrest the cell cycle is critical for cellular transformation, uncontrolled cellular growth and proliferation induced by viral infection. Stimulation of progression from G1 to S phase allows the virus to efficiently use the cellular DNA replicating machinery to achieve viral genome replication (By similarity).</text>
</comment>
<comment type="subunit">
    <text evidence="1">Interaction with host RB1 induces the aberrant dissociation of RB1-E2F1 complex thereby disrupting RB1's activity.</text>
</comment>
<proteinExistence type="inferred from homology"/>
<organism>
    <name type="scientific">Murine adenovirus A serotype 1</name>
    <name type="common">MAdV-1</name>
    <name type="synonym">Murine adenovirus 1</name>
    <dbReference type="NCBI Taxonomy" id="10530"/>
    <lineage>
        <taxon>Viruses</taxon>
        <taxon>Varidnaviria</taxon>
        <taxon>Bamfordvirae</taxon>
        <taxon>Preplasmiviricota</taxon>
        <taxon>Tectiliviricetes</taxon>
        <taxon>Rowavirales</taxon>
        <taxon>Adenoviridae</taxon>
        <taxon>Mastadenovirus</taxon>
        <taxon>Murine mastadenovirus A</taxon>
    </lineage>
</organism>
<reference key="1">
    <citation type="journal article" date="1988" name="J. Virol.">
        <title>Identification of mouse adenovirus type 1 early region 1: DNA sequence and a conserved transactivating function.</title>
        <authorList>
            <person name="Ball A.O."/>
            <person name="Williams M.E."/>
            <person name="Spindler K.R."/>
        </authorList>
    </citation>
    <scope>NUCLEOTIDE SEQUENCE [GENOMIC DNA]</scope>
</reference>
<dbReference type="EMBL" id="M22245">
    <property type="protein sequence ID" value="AAA42424.1"/>
    <property type="molecule type" value="Genomic_DNA"/>
</dbReference>
<dbReference type="RefSeq" id="NP_015532.1">
    <property type="nucleotide sequence ID" value="NC_000942.1"/>
</dbReference>
<dbReference type="IntAct" id="P12534">
    <property type="interactions" value="2"/>
</dbReference>
<dbReference type="GeneID" id="1732772"/>
<dbReference type="KEGG" id="vg:1732772"/>
<dbReference type="GO" id="GO:0008270">
    <property type="term" value="F:zinc ion binding"/>
    <property type="evidence" value="ECO:0007669"/>
    <property type="project" value="UniProtKB-KW"/>
</dbReference>
<dbReference type="GO" id="GO:0039645">
    <property type="term" value="P:symbiont-mediated perturbation of host cell cycle G1/S transition checkpoint"/>
    <property type="evidence" value="ECO:0007669"/>
    <property type="project" value="UniProtKB-KW"/>
</dbReference>
<dbReference type="GO" id="GO:0052170">
    <property type="term" value="P:symbiont-mediated suppression of host innate immune response"/>
    <property type="evidence" value="ECO:0007669"/>
    <property type="project" value="UniProtKB-KW"/>
</dbReference>
<dbReference type="GO" id="GO:0039563">
    <property type="term" value="P:symbiont-mediated suppression of host JAK-STAT cascade via inhibition of STAT1 activity"/>
    <property type="evidence" value="ECO:0007669"/>
    <property type="project" value="UniProtKB-KW"/>
</dbReference>
<dbReference type="GO" id="GO:0039502">
    <property type="term" value="P:symbiont-mediated suppression of host type I interferon-mediated signaling pathway"/>
    <property type="evidence" value="ECO:0007669"/>
    <property type="project" value="UniProtKB-KW"/>
</dbReference>
<sequence>MSRLLRLSLSSRVWLAAQEATRNVSEDPVVCRTPWDGSPTCTAVRVVRAEVLADGTMDLDIVFPEAAVQAVFSRTPWQDSTTATSAEEPSASTDSISSDPLPISCVESFEDMDLRCYEQLSPSPESIETIEVFPPCSTCGGHEVNGFCSLCYLRGLTDLLPQADDAGEAEVPDESAKDLCFMDLLTWAMEDKTECSRHDE</sequence>
<protein>
    <recommendedName>
        <fullName>Early E1A 21 kDa protein</fullName>
    </recommendedName>
</protein>
<organismHost>
    <name type="scientific">Mus musculus</name>
    <name type="common">Mouse</name>
    <dbReference type="NCBI Taxonomy" id="10090"/>
</organismHost>
<feature type="chain" id="PRO_0000221704" description="Early E1A 21 kDa protein">
    <location>
        <begin position="1"/>
        <end position="200"/>
    </location>
</feature>
<feature type="zinc finger region" evidence="2">
    <location>
        <begin position="136"/>
        <end position="151"/>
    </location>
</feature>
<feature type="region of interest" description="Disordered" evidence="3">
    <location>
        <begin position="78"/>
        <end position="98"/>
    </location>
</feature>
<feature type="short sequence motif" description="LXCXE motif, interaction with host RB1" evidence="2">
    <location>
        <begin position="114"/>
        <end position="118"/>
    </location>
</feature>
<feature type="short sequence motif" description="Nuclear localization signal" evidence="2">
    <location>
        <begin position="196"/>
        <end position="200"/>
    </location>
</feature>
<evidence type="ECO:0000250" key="1"/>
<evidence type="ECO:0000255" key="2"/>
<evidence type="ECO:0000256" key="3">
    <source>
        <dbReference type="SAM" id="MobiDB-lite"/>
    </source>
</evidence>
<name>E1A_ADEM1</name>